<evidence type="ECO:0000250" key="1"/>
<evidence type="ECO:0000305" key="2"/>
<organism>
    <name type="scientific">Vibrio proteolyticus</name>
    <name type="common">Aeromonas proteolytica</name>
    <dbReference type="NCBI Taxonomy" id="671"/>
    <lineage>
        <taxon>Bacteria</taxon>
        <taxon>Pseudomonadati</taxon>
        <taxon>Pseudomonadota</taxon>
        <taxon>Gammaproteobacteria</taxon>
        <taxon>Vibrionales</taxon>
        <taxon>Vibrionaceae</taxon>
        <taxon>Vibrio</taxon>
    </lineage>
</organism>
<dbReference type="EMBL" id="M96574">
    <property type="protein sequence ID" value="AAA21939.1"/>
    <property type="molecule type" value="Genomic_DNA"/>
</dbReference>
<dbReference type="PIR" id="S35438">
    <property type="entry name" value="S35438"/>
</dbReference>
<dbReference type="RefSeq" id="WP_021707210.1">
    <property type="nucleotide sequence ID" value="NZ_BAABTA010000021.1"/>
</dbReference>
<dbReference type="SMR" id="P28080"/>
<dbReference type="GeneID" id="88758901"/>
<dbReference type="GO" id="GO:0005829">
    <property type="term" value="C:cytosol"/>
    <property type="evidence" value="ECO:0007669"/>
    <property type="project" value="TreeGrafter"/>
</dbReference>
<dbReference type="GO" id="GO:0003677">
    <property type="term" value="F:DNA binding"/>
    <property type="evidence" value="ECO:0007669"/>
    <property type="project" value="UniProtKB-KW"/>
</dbReference>
<dbReference type="GO" id="GO:0030527">
    <property type="term" value="F:structural constituent of chromatin"/>
    <property type="evidence" value="ECO:0007669"/>
    <property type="project" value="InterPro"/>
</dbReference>
<dbReference type="GO" id="GO:0030261">
    <property type="term" value="P:chromosome condensation"/>
    <property type="evidence" value="ECO:0007669"/>
    <property type="project" value="UniProtKB-KW"/>
</dbReference>
<dbReference type="CDD" id="cd13831">
    <property type="entry name" value="HU"/>
    <property type="match status" value="1"/>
</dbReference>
<dbReference type="FunFam" id="4.10.520.10:FF:000001">
    <property type="entry name" value="DNA-binding protein HU"/>
    <property type="match status" value="1"/>
</dbReference>
<dbReference type="Gene3D" id="4.10.520.10">
    <property type="entry name" value="IHF-like DNA-binding proteins"/>
    <property type="match status" value="1"/>
</dbReference>
<dbReference type="InterPro" id="IPR000119">
    <property type="entry name" value="Hist_DNA-bd"/>
</dbReference>
<dbReference type="InterPro" id="IPR020816">
    <property type="entry name" value="Histone-like_DNA-bd_CS"/>
</dbReference>
<dbReference type="InterPro" id="IPR010992">
    <property type="entry name" value="IHF-like_DNA-bd_dom_sf"/>
</dbReference>
<dbReference type="NCBIfam" id="NF008023">
    <property type="entry name" value="PRK10753.1"/>
    <property type="match status" value="1"/>
</dbReference>
<dbReference type="PANTHER" id="PTHR33175">
    <property type="entry name" value="DNA-BINDING PROTEIN HU"/>
    <property type="match status" value="1"/>
</dbReference>
<dbReference type="PANTHER" id="PTHR33175:SF12">
    <property type="entry name" value="DNA-BINDING PROTEIN HU-ALPHA"/>
    <property type="match status" value="1"/>
</dbReference>
<dbReference type="Pfam" id="PF00216">
    <property type="entry name" value="Bac_DNA_binding"/>
    <property type="match status" value="1"/>
</dbReference>
<dbReference type="PRINTS" id="PR01727">
    <property type="entry name" value="DNABINDINGHU"/>
</dbReference>
<dbReference type="SMART" id="SM00411">
    <property type="entry name" value="BHL"/>
    <property type="match status" value="1"/>
</dbReference>
<dbReference type="SUPFAM" id="SSF47729">
    <property type="entry name" value="IHF-like DNA-binding proteins"/>
    <property type="match status" value="1"/>
</dbReference>
<dbReference type="PROSITE" id="PS00045">
    <property type="entry name" value="HISTONE_LIKE"/>
    <property type="match status" value="1"/>
</dbReference>
<reference key="1">
    <citation type="journal article" date="1992" name="Nucleic Acids Res.">
        <title>Isolation and characterization of the hupA gene coding for HU of Aeromonas proteolytica.</title>
        <authorList>
            <person name="Giladi H."/>
            <person name="Wang W.-X."/>
            <person name="Oppenheim A.B."/>
        </authorList>
    </citation>
    <scope>NUCLEOTIDE SEQUENCE [GENOMIC DNA]</scope>
</reference>
<proteinExistence type="inferred from homology"/>
<gene>
    <name type="primary">hupA</name>
</gene>
<keyword id="KW-0226">DNA condensation</keyword>
<keyword id="KW-0238">DNA-binding</keyword>
<sequence>MNKTQLIDFIAEKADLSKAQAKAALEATLDGVTDALKEGDQVQLIGFGTFKVNHRAARTGRNPKTGAEIQIAAANVPAFVAGKALKDAVK</sequence>
<name>DBHA_VIBPR</name>
<protein>
    <recommendedName>
        <fullName>DNA-binding protein HU-alpha</fullName>
    </recommendedName>
</protein>
<feature type="chain" id="PRO_0000104995" description="DNA-binding protein HU-alpha">
    <location>
        <begin position="1"/>
        <end position="90"/>
    </location>
</feature>
<accession>P28080</accession>
<comment type="function">
    <text>Histone-like DNA-binding protein which is capable of wrapping DNA to stabilize it, and thus to prevent its denaturation under extreme environmental conditions.</text>
</comment>
<comment type="subunit">
    <text evidence="1">Heterodimer of an alpha and a beta chain.</text>
</comment>
<comment type="similarity">
    <text evidence="2">Belongs to the bacterial histone-like protein family.</text>
</comment>